<keyword id="KW-0133">Cell shape</keyword>
<keyword id="KW-0961">Cell wall biogenesis/degradation</keyword>
<keyword id="KW-0460">Magnesium</keyword>
<keyword id="KW-0479">Metal-binding</keyword>
<keyword id="KW-0573">Peptidoglycan synthesis</keyword>
<keyword id="KW-1185">Reference proteome</keyword>
<keyword id="KW-0808">Transferase</keyword>
<organism>
    <name type="scientific">Escherichia coli O157:H7</name>
    <dbReference type="NCBI Taxonomy" id="83334"/>
    <lineage>
        <taxon>Bacteria</taxon>
        <taxon>Pseudomonadati</taxon>
        <taxon>Pseudomonadota</taxon>
        <taxon>Gammaproteobacteria</taxon>
        <taxon>Enterobacterales</taxon>
        <taxon>Enterobacteriaceae</taxon>
        <taxon>Escherichia</taxon>
    </lineage>
</organism>
<reference key="1">
    <citation type="journal article" date="2001" name="Nature">
        <title>Genome sequence of enterohaemorrhagic Escherichia coli O157:H7.</title>
        <authorList>
            <person name="Perna N.T."/>
            <person name="Plunkett G. III"/>
            <person name="Burland V."/>
            <person name="Mau B."/>
            <person name="Glasner J.D."/>
            <person name="Rose D.J."/>
            <person name="Mayhew G.F."/>
            <person name="Evans P.S."/>
            <person name="Gregor J."/>
            <person name="Kirkpatrick H.A."/>
            <person name="Posfai G."/>
            <person name="Hackett J."/>
            <person name="Klink S."/>
            <person name="Boutin A."/>
            <person name="Shao Y."/>
            <person name="Miller L."/>
            <person name="Grotbeck E.J."/>
            <person name="Davis N.W."/>
            <person name="Lim A."/>
            <person name="Dimalanta E.T."/>
            <person name="Potamousis K."/>
            <person name="Apodaca J."/>
            <person name="Anantharaman T.S."/>
            <person name="Lin J."/>
            <person name="Yen G."/>
            <person name="Schwartz D.C."/>
            <person name="Welch R.A."/>
            <person name="Blattner F.R."/>
        </authorList>
    </citation>
    <scope>NUCLEOTIDE SEQUENCE [LARGE SCALE GENOMIC DNA]</scope>
    <source>
        <strain>O157:H7 / EDL933 / ATCC 700927 / EHEC</strain>
    </source>
</reference>
<reference key="2">
    <citation type="journal article" date="2001" name="DNA Res.">
        <title>Complete genome sequence of enterohemorrhagic Escherichia coli O157:H7 and genomic comparison with a laboratory strain K-12.</title>
        <authorList>
            <person name="Hayashi T."/>
            <person name="Makino K."/>
            <person name="Ohnishi M."/>
            <person name="Kurokawa K."/>
            <person name="Ishii K."/>
            <person name="Yokoyama K."/>
            <person name="Han C.-G."/>
            <person name="Ohtsubo E."/>
            <person name="Nakayama K."/>
            <person name="Murata T."/>
            <person name="Tanaka M."/>
            <person name="Tobe T."/>
            <person name="Iida T."/>
            <person name="Takami H."/>
            <person name="Honda T."/>
            <person name="Sasakawa C."/>
            <person name="Ogasawara N."/>
            <person name="Yasunaga T."/>
            <person name="Kuhara S."/>
            <person name="Shiba T."/>
            <person name="Hattori M."/>
            <person name="Shinagawa H."/>
        </authorList>
    </citation>
    <scope>NUCLEOTIDE SEQUENCE [LARGE SCALE GENOMIC DNA]</scope>
    <source>
        <strain>O157:H7 / Sakai / RIMD 0509952 / EHEC</strain>
    </source>
</reference>
<sequence>MMLSATQPLSEKLPAHGCRHVAIIMDGNGRWAKKQGKIRAFGHKAGAKSVRRAVSFAANNGIEALTLYAFSSENWNRPAQEVSALMELFVWALDSEVKSLHRHNVRLRIIGDTSRFNSRLQERIRKSEALTAGNTGLTLNIAANYGGRWDIVQGVRQLAEKVQQGNLQPDQIDEEMLNQHVCMHELAPVDLVIRTGGEHRISNFLLWQIAYAELYFTDVLWPDFDEQDFEGALNAFANRERRFGGTEPGDETA</sequence>
<accession>P60474</accession>
<accession>P75668</accession>
<accession>Q47675</accession>
<accession>Q9R2E4</accession>
<feature type="chain" id="PRO_0000123611" description="Ditrans,polycis-undecaprenyl-diphosphate synthase ((2E,6E)-farnesyl-diphosphate specific)">
    <location>
        <begin position="1"/>
        <end position="253"/>
    </location>
</feature>
<feature type="active site" evidence="1">
    <location>
        <position position="26"/>
    </location>
</feature>
<feature type="active site" description="Proton acceptor" evidence="1">
    <location>
        <position position="74"/>
    </location>
</feature>
<feature type="binding site" evidence="1">
    <location>
        <position position="26"/>
    </location>
    <ligand>
        <name>Mg(2+)</name>
        <dbReference type="ChEBI" id="CHEBI:18420"/>
    </ligand>
</feature>
<feature type="binding site" evidence="1">
    <location>
        <begin position="27"/>
        <end position="30"/>
    </location>
    <ligand>
        <name>substrate</name>
    </ligand>
</feature>
<feature type="binding site" evidence="1">
    <location>
        <position position="31"/>
    </location>
    <ligand>
        <name>substrate</name>
    </ligand>
</feature>
<feature type="binding site" evidence="1">
    <location>
        <position position="39"/>
    </location>
    <ligand>
        <name>substrate</name>
    </ligand>
</feature>
<feature type="binding site" evidence="1">
    <location>
        <position position="43"/>
    </location>
    <ligand>
        <name>substrate</name>
    </ligand>
</feature>
<feature type="binding site" evidence="1">
    <location>
        <begin position="71"/>
        <end position="73"/>
    </location>
    <ligand>
        <name>substrate</name>
    </ligand>
</feature>
<feature type="binding site" evidence="1">
    <location>
        <position position="75"/>
    </location>
    <ligand>
        <name>substrate</name>
    </ligand>
</feature>
<feature type="binding site" evidence="1">
    <location>
        <position position="77"/>
    </location>
    <ligand>
        <name>substrate</name>
    </ligand>
</feature>
<feature type="binding site" evidence="1">
    <location>
        <position position="194"/>
    </location>
    <ligand>
        <name>substrate</name>
    </ligand>
</feature>
<feature type="binding site" evidence="1">
    <location>
        <position position="199"/>
    </location>
    <ligand>
        <name>Mg(2+)</name>
        <dbReference type="ChEBI" id="CHEBI:18420"/>
    </ligand>
</feature>
<feature type="binding site" evidence="1">
    <location>
        <begin position="200"/>
        <end position="202"/>
    </location>
    <ligand>
        <name>substrate</name>
    </ligand>
</feature>
<feature type="binding site" evidence="1">
    <location>
        <position position="213"/>
    </location>
    <ligand>
        <name>Mg(2+)</name>
        <dbReference type="ChEBI" id="CHEBI:18420"/>
    </ligand>
</feature>
<evidence type="ECO:0000255" key="1">
    <source>
        <dbReference type="HAMAP-Rule" id="MF_01139"/>
    </source>
</evidence>
<evidence type="ECO:0000305" key="2"/>
<name>UPPS_ECO57</name>
<comment type="function">
    <text evidence="1">Catalyzes the sequential condensation of isopentenyl diphosphate (IPP) with (2E,6E)-farnesyl diphosphate (E,E-FPP) to yield (2Z,6Z,10Z,14Z,18Z,22Z,26Z,30Z,34E,38E)-undecaprenyl diphosphate (di-trans,octa-cis-UPP). UPP is the precursor of glycosyl carrier lipid in the biosynthesis of bacterial cell wall polysaccharide components such as peptidoglycan and lipopolysaccharide.</text>
</comment>
<comment type="catalytic activity">
    <reaction evidence="1">
        <text>8 isopentenyl diphosphate + (2E,6E)-farnesyl diphosphate = di-trans,octa-cis-undecaprenyl diphosphate + 8 diphosphate</text>
        <dbReference type="Rhea" id="RHEA:27551"/>
        <dbReference type="ChEBI" id="CHEBI:33019"/>
        <dbReference type="ChEBI" id="CHEBI:58405"/>
        <dbReference type="ChEBI" id="CHEBI:128769"/>
        <dbReference type="ChEBI" id="CHEBI:175763"/>
        <dbReference type="EC" id="2.5.1.31"/>
    </reaction>
</comment>
<comment type="cofactor">
    <cofactor evidence="1">
        <name>Mg(2+)</name>
        <dbReference type="ChEBI" id="CHEBI:18420"/>
    </cofactor>
    <text evidence="1">Binds 2 magnesium ions per subunit.</text>
</comment>
<comment type="subunit">
    <text evidence="1">Homodimer.</text>
</comment>
<comment type="similarity">
    <text evidence="1">Belongs to the UPP synthase family.</text>
</comment>
<comment type="sequence caution" evidence="2">
    <conflict type="erroneous initiation">
        <sequence resource="EMBL-CDS" id="BAB33599"/>
    </conflict>
    <text>Truncated N-terminus.</text>
</comment>
<gene>
    <name evidence="1" type="primary">uppS</name>
    <name type="ordered locus">Z0185</name>
    <name type="ordered locus">ECs0176</name>
</gene>
<dbReference type="EC" id="2.5.1.31" evidence="1"/>
<dbReference type="EMBL" id="AE005174">
    <property type="protein sequence ID" value="AAG54476.1"/>
    <property type="molecule type" value="Genomic_DNA"/>
</dbReference>
<dbReference type="EMBL" id="BA000007">
    <property type="protein sequence ID" value="BAB33599.2"/>
    <property type="status" value="ALT_INIT"/>
    <property type="molecule type" value="Genomic_DNA"/>
</dbReference>
<dbReference type="PIR" id="H85501">
    <property type="entry name" value="H85501"/>
</dbReference>
<dbReference type="PIR" id="H90650">
    <property type="entry name" value="H90650"/>
</dbReference>
<dbReference type="RefSeq" id="NP_308203.1">
    <property type="nucleotide sequence ID" value="NC_002695.1"/>
</dbReference>
<dbReference type="SMR" id="P60474"/>
<dbReference type="STRING" id="155864.Z0185"/>
<dbReference type="KEGG" id="ece:Z0185"/>
<dbReference type="KEGG" id="ecs:ECs_0176"/>
<dbReference type="PATRIC" id="fig|386585.9.peg.278"/>
<dbReference type="eggNOG" id="COG0020">
    <property type="taxonomic scope" value="Bacteria"/>
</dbReference>
<dbReference type="HOGENOM" id="CLU_038505_1_1_6"/>
<dbReference type="OMA" id="FDRRDLW"/>
<dbReference type="Proteomes" id="UP000000558">
    <property type="component" value="Chromosome"/>
</dbReference>
<dbReference type="Proteomes" id="UP000002519">
    <property type="component" value="Chromosome"/>
</dbReference>
<dbReference type="GO" id="GO:0005829">
    <property type="term" value="C:cytosol"/>
    <property type="evidence" value="ECO:0007669"/>
    <property type="project" value="TreeGrafter"/>
</dbReference>
<dbReference type="GO" id="GO:0008834">
    <property type="term" value="F:ditrans,polycis-undecaprenyl-diphosphate synthase [(2E,6E)-farnesyl-diphosphate specific] activity"/>
    <property type="evidence" value="ECO:0007669"/>
    <property type="project" value="UniProtKB-UniRule"/>
</dbReference>
<dbReference type="GO" id="GO:0000287">
    <property type="term" value="F:magnesium ion binding"/>
    <property type="evidence" value="ECO:0007669"/>
    <property type="project" value="UniProtKB-UniRule"/>
</dbReference>
<dbReference type="GO" id="GO:0071555">
    <property type="term" value="P:cell wall organization"/>
    <property type="evidence" value="ECO:0007669"/>
    <property type="project" value="UniProtKB-KW"/>
</dbReference>
<dbReference type="GO" id="GO:0009252">
    <property type="term" value="P:peptidoglycan biosynthetic process"/>
    <property type="evidence" value="ECO:0007669"/>
    <property type="project" value="UniProtKB-UniRule"/>
</dbReference>
<dbReference type="GO" id="GO:0016094">
    <property type="term" value="P:polyprenol biosynthetic process"/>
    <property type="evidence" value="ECO:0007669"/>
    <property type="project" value="TreeGrafter"/>
</dbReference>
<dbReference type="GO" id="GO:0008360">
    <property type="term" value="P:regulation of cell shape"/>
    <property type="evidence" value="ECO:0007669"/>
    <property type="project" value="UniProtKB-KW"/>
</dbReference>
<dbReference type="CDD" id="cd00475">
    <property type="entry name" value="Cis_IPPS"/>
    <property type="match status" value="1"/>
</dbReference>
<dbReference type="FunFam" id="3.40.1180.10:FF:000001">
    <property type="entry name" value="(2E,6E)-farnesyl-diphosphate-specific ditrans,polycis-undecaprenyl-diphosphate synthase"/>
    <property type="match status" value="1"/>
</dbReference>
<dbReference type="Gene3D" id="3.40.1180.10">
    <property type="entry name" value="Decaprenyl diphosphate synthase-like"/>
    <property type="match status" value="1"/>
</dbReference>
<dbReference type="HAMAP" id="MF_01139">
    <property type="entry name" value="ISPT"/>
    <property type="match status" value="1"/>
</dbReference>
<dbReference type="InterPro" id="IPR001441">
    <property type="entry name" value="UPP_synth-like"/>
</dbReference>
<dbReference type="InterPro" id="IPR018520">
    <property type="entry name" value="UPP_synth-like_CS"/>
</dbReference>
<dbReference type="InterPro" id="IPR036424">
    <property type="entry name" value="UPP_synth-like_sf"/>
</dbReference>
<dbReference type="NCBIfam" id="NF007596">
    <property type="entry name" value="PRK10240.1"/>
    <property type="match status" value="1"/>
</dbReference>
<dbReference type="NCBIfam" id="NF011405">
    <property type="entry name" value="PRK14830.1"/>
    <property type="match status" value="1"/>
</dbReference>
<dbReference type="NCBIfam" id="TIGR00055">
    <property type="entry name" value="uppS"/>
    <property type="match status" value="1"/>
</dbReference>
<dbReference type="PANTHER" id="PTHR10291:SF0">
    <property type="entry name" value="DEHYDRODOLICHYL DIPHOSPHATE SYNTHASE 2"/>
    <property type="match status" value="1"/>
</dbReference>
<dbReference type="PANTHER" id="PTHR10291">
    <property type="entry name" value="DEHYDRODOLICHYL DIPHOSPHATE SYNTHASE FAMILY MEMBER"/>
    <property type="match status" value="1"/>
</dbReference>
<dbReference type="Pfam" id="PF01255">
    <property type="entry name" value="Prenyltransf"/>
    <property type="match status" value="1"/>
</dbReference>
<dbReference type="SUPFAM" id="SSF64005">
    <property type="entry name" value="Undecaprenyl diphosphate synthase"/>
    <property type="match status" value="1"/>
</dbReference>
<dbReference type="PROSITE" id="PS01066">
    <property type="entry name" value="UPP_SYNTHASE"/>
    <property type="match status" value="1"/>
</dbReference>
<proteinExistence type="inferred from homology"/>
<protein>
    <recommendedName>
        <fullName evidence="1">Ditrans,polycis-undecaprenyl-diphosphate synthase ((2E,6E)-farnesyl-diphosphate specific)</fullName>
        <ecNumber evidence="1">2.5.1.31</ecNumber>
    </recommendedName>
    <alternativeName>
        <fullName evidence="1">Ditrans,polycis-undecaprenylcistransferase</fullName>
    </alternativeName>
    <alternativeName>
        <fullName evidence="1">Undecaprenyl diphosphate synthase</fullName>
        <shortName evidence="1">UDS</shortName>
    </alternativeName>
    <alternativeName>
        <fullName evidence="1">Undecaprenyl pyrophosphate synthase</fullName>
        <shortName evidence="1">UPP synthase</shortName>
    </alternativeName>
</protein>